<keyword id="KW-0010">Activator</keyword>
<keyword id="KW-0067">ATP-binding</keyword>
<keyword id="KW-0238">DNA-binding</keyword>
<keyword id="KW-0347">Helicase</keyword>
<keyword id="KW-0378">Hydrolase</keyword>
<keyword id="KW-0547">Nucleotide-binding</keyword>
<keyword id="KW-0804">Transcription</keyword>
<keyword id="KW-0805">Transcription regulation</keyword>
<name>RAPA_SHIBS</name>
<evidence type="ECO:0000255" key="1">
    <source>
        <dbReference type="HAMAP-Rule" id="MF_01821"/>
    </source>
</evidence>
<protein>
    <recommendedName>
        <fullName evidence="1">RNA polymerase-associated protein RapA</fullName>
        <ecNumber evidence="1">3.6.4.-</ecNumber>
    </recommendedName>
    <alternativeName>
        <fullName evidence="1">ATP-dependent helicase HepA</fullName>
    </alternativeName>
</protein>
<comment type="function">
    <text evidence="1">Transcription regulator that activates transcription by stimulating RNA polymerase (RNAP) recycling in case of stress conditions such as supercoiled DNA or high salt concentrations. Probably acts by releasing the RNAP, when it is trapped or immobilized on tightly supercoiled DNA. Does not activate transcription on linear DNA. Probably not involved in DNA repair.</text>
</comment>
<comment type="subunit">
    <text evidence="1">Interacts with the RNAP. Has a higher affinity for the core RNAP than for the holoenzyme. Its ATPase activity is stimulated by binding to RNAP.</text>
</comment>
<comment type="similarity">
    <text evidence="1">Belongs to the SNF2/RAD54 helicase family. RapA subfamily.</text>
</comment>
<proteinExistence type="inferred from homology"/>
<accession>Q326H6</accession>
<feature type="chain" id="PRO_1000088392" description="RNA polymerase-associated protein RapA">
    <location>
        <begin position="1"/>
        <end position="968"/>
    </location>
</feature>
<feature type="domain" description="Helicase ATP-binding" evidence="1">
    <location>
        <begin position="164"/>
        <end position="334"/>
    </location>
</feature>
<feature type="domain" description="Helicase C-terminal" evidence="1">
    <location>
        <begin position="490"/>
        <end position="662"/>
    </location>
</feature>
<feature type="short sequence motif" description="DEAH box">
    <location>
        <begin position="280"/>
        <end position="283"/>
    </location>
</feature>
<feature type="binding site" evidence="1">
    <location>
        <begin position="177"/>
        <end position="184"/>
    </location>
    <ligand>
        <name>ATP</name>
        <dbReference type="ChEBI" id="CHEBI:30616"/>
    </ligand>
</feature>
<organism>
    <name type="scientific">Shigella boydii serotype 4 (strain Sb227)</name>
    <dbReference type="NCBI Taxonomy" id="300268"/>
    <lineage>
        <taxon>Bacteria</taxon>
        <taxon>Pseudomonadati</taxon>
        <taxon>Pseudomonadota</taxon>
        <taxon>Gammaproteobacteria</taxon>
        <taxon>Enterobacterales</taxon>
        <taxon>Enterobacteriaceae</taxon>
        <taxon>Shigella</taxon>
    </lineage>
</organism>
<reference key="1">
    <citation type="journal article" date="2005" name="Nucleic Acids Res.">
        <title>Genome dynamics and diversity of Shigella species, the etiologic agents of bacillary dysentery.</title>
        <authorList>
            <person name="Yang F."/>
            <person name="Yang J."/>
            <person name="Zhang X."/>
            <person name="Chen L."/>
            <person name="Jiang Y."/>
            <person name="Yan Y."/>
            <person name="Tang X."/>
            <person name="Wang J."/>
            <person name="Xiong Z."/>
            <person name="Dong J."/>
            <person name="Xue Y."/>
            <person name="Zhu Y."/>
            <person name="Xu X."/>
            <person name="Sun L."/>
            <person name="Chen S."/>
            <person name="Nie H."/>
            <person name="Peng J."/>
            <person name="Xu J."/>
            <person name="Wang Y."/>
            <person name="Yuan Z."/>
            <person name="Wen Y."/>
            <person name="Yao Z."/>
            <person name="Shen Y."/>
            <person name="Qiang B."/>
            <person name="Hou Y."/>
            <person name="Yu J."/>
            <person name="Jin Q."/>
        </authorList>
    </citation>
    <scope>NUCLEOTIDE SEQUENCE [LARGE SCALE GENOMIC DNA]</scope>
    <source>
        <strain>Sb227</strain>
    </source>
</reference>
<gene>
    <name evidence="1" type="primary">rapA</name>
    <name type="ordered locus">SBO_0046</name>
</gene>
<sequence>MPFTLGQRWISDTESELGLGTVVAVDARTVTLLFPSTGENRLYARSDSPVTRVMFNPGDTITSHDGWQMQVEEVKEENGLLTYIGTRLDTEESGVALREVFLDSKLVFSKPQDRLFAGQIDRMDRFALRYRARKYSSEQFRMPYSGLRGQRTSLIPHQLNIAHDVGRRHAPRVLLADEVGLGKTIEAGMILHQQLLSGAAERVLIIVPETLQHQWLVEMLRRFNLRFALFDDERYAEAQHDAYNPFDTEQLVICSLDFARRSKQRLEHLCEAEWDLLVVDEAHHLVWSEDAPSREYQAIEQLAEHMPGVLLLTATPEQLGMESHFARLRLLDPNRFHDFAQFVEEQKNYRPVADAVAMLLAGNKLSNDELNMLGEMIGEQDIEPLLQAANSDSEDAQSARQELVSMLMDRHGTSRVLFRNTRNGVKGFPKRELHTIKLPLPTQYQTAIKVSGIMGARKSAEDRARDMLYPERIYQEFEGDNATWWNFDPRVEWLMGYLTSHRSQKVLVICAKAATALQLEQVLREREGIRAAVFHEGMSIIERDRAAAWFAEEDTGAQVLLCSEIGSEGRNFQFASHMVMFDLPFNPDLLEQRIGRLDRIGQAHDIQIHVPYLEKTAQSVLVRWYHEGLDAFEHTCPTGRTIYDSVYNDLINYLASPDQTEGFDDLIKNCREQHEALKAQLEQGRDRLLEIHSNGGEKAQALAESIEEQDDDTNLIAFAMNLLDIIGINQDDRGDNMIVLTPSDHMLVPDFPGLSEDGITITFDREVALAREDAQFITWEHPLIRNGLDLILSGDTGSSTISLLKNKALPVGTLLVELIYVVEAQAPKQLQLNRFLPPTPVRMLLDKNGNNLAAQVEFETFNRQLNAVNRHTGSKLVNAVQQDVHAILQLGEAQIEKSARALIDAARNEADEKLSAELSRLEALRAVNPNIRDDELTAIESNRQQVMESLDQAGWRLDALRLIVVTHQ</sequence>
<dbReference type="EC" id="3.6.4.-" evidence="1"/>
<dbReference type="EMBL" id="CP000036">
    <property type="protein sequence ID" value="ABB64782.1"/>
    <property type="molecule type" value="Genomic_DNA"/>
</dbReference>
<dbReference type="RefSeq" id="WP_001116989.1">
    <property type="nucleotide sequence ID" value="NC_007613.1"/>
</dbReference>
<dbReference type="SMR" id="Q326H6"/>
<dbReference type="KEGG" id="sbo:SBO_0046"/>
<dbReference type="HOGENOM" id="CLU_011520_0_0_6"/>
<dbReference type="Proteomes" id="UP000007067">
    <property type="component" value="Chromosome"/>
</dbReference>
<dbReference type="GO" id="GO:0005524">
    <property type="term" value="F:ATP binding"/>
    <property type="evidence" value="ECO:0007669"/>
    <property type="project" value="UniProtKB-UniRule"/>
</dbReference>
<dbReference type="GO" id="GO:0003677">
    <property type="term" value="F:DNA binding"/>
    <property type="evidence" value="ECO:0007669"/>
    <property type="project" value="UniProtKB-KW"/>
</dbReference>
<dbReference type="GO" id="GO:0004386">
    <property type="term" value="F:helicase activity"/>
    <property type="evidence" value="ECO:0007669"/>
    <property type="project" value="UniProtKB-UniRule"/>
</dbReference>
<dbReference type="GO" id="GO:0016817">
    <property type="term" value="F:hydrolase activity, acting on acid anhydrides"/>
    <property type="evidence" value="ECO:0007669"/>
    <property type="project" value="InterPro"/>
</dbReference>
<dbReference type="GO" id="GO:0006355">
    <property type="term" value="P:regulation of DNA-templated transcription"/>
    <property type="evidence" value="ECO:0007669"/>
    <property type="project" value="UniProtKB-UniRule"/>
</dbReference>
<dbReference type="CDD" id="cd18011">
    <property type="entry name" value="DEXDc_RapA"/>
    <property type="match status" value="1"/>
</dbReference>
<dbReference type="CDD" id="cd18793">
    <property type="entry name" value="SF2_C_SNF"/>
    <property type="match status" value="1"/>
</dbReference>
<dbReference type="FunFam" id="2.30.30.140:FF:000020">
    <property type="entry name" value="RNA polymerase-associated protein RapA"/>
    <property type="match status" value="1"/>
</dbReference>
<dbReference type="FunFam" id="2.30.30.930:FF:000001">
    <property type="entry name" value="RNA polymerase-associated protein RapA"/>
    <property type="match status" value="1"/>
</dbReference>
<dbReference type="FunFam" id="3.30.360.80:FF:000001">
    <property type="entry name" value="RNA polymerase-associated protein RapA"/>
    <property type="match status" value="1"/>
</dbReference>
<dbReference type="FunFam" id="3.40.50.10810:FF:000012">
    <property type="entry name" value="RNA polymerase-associated protein RapA"/>
    <property type="match status" value="1"/>
</dbReference>
<dbReference type="FunFam" id="3.40.50.300:FF:000350">
    <property type="entry name" value="RNA polymerase-associated protein RapA"/>
    <property type="match status" value="1"/>
</dbReference>
<dbReference type="Gene3D" id="2.30.30.140">
    <property type="match status" value="1"/>
</dbReference>
<dbReference type="Gene3D" id="2.30.30.930">
    <property type="match status" value="1"/>
</dbReference>
<dbReference type="Gene3D" id="3.30.360.80">
    <property type="match status" value="1"/>
</dbReference>
<dbReference type="Gene3D" id="6.10.140.1500">
    <property type="match status" value="1"/>
</dbReference>
<dbReference type="Gene3D" id="6.10.140.2230">
    <property type="match status" value="1"/>
</dbReference>
<dbReference type="Gene3D" id="3.40.50.300">
    <property type="entry name" value="P-loop containing nucleotide triphosphate hydrolases"/>
    <property type="match status" value="1"/>
</dbReference>
<dbReference type="Gene3D" id="3.40.50.10810">
    <property type="entry name" value="Tandem AAA-ATPase domain"/>
    <property type="match status" value="1"/>
</dbReference>
<dbReference type="HAMAP" id="MF_01821">
    <property type="entry name" value="Helicase_RapA"/>
    <property type="match status" value="1"/>
</dbReference>
<dbReference type="InterPro" id="IPR014001">
    <property type="entry name" value="Helicase_ATP-bd"/>
</dbReference>
<dbReference type="InterPro" id="IPR001650">
    <property type="entry name" value="Helicase_C-like"/>
</dbReference>
<dbReference type="InterPro" id="IPR023949">
    <property type="entry name" value="Helicase_RapA"/>
</dbReference>
<dbReference type="InterPro" id="IPR027417">
    <property type="entry name" value="P-loop_NTPase"/>
</dbReference>
<dbReference type="InterPro" id="IPR022737">
    <property type="entry name" value="RapA_C"/>
</dbReference>
<dbReference type="InterPro" id="IPR038718">
    <property type="entry name" value="SNF2-like_sf"/>
</dbReference>
<dbReference type="InterPro" id="IPR049730">
    <property type="entry name" value="SNF2/RAD54-like_C"/>
</dbReference>
<dbReference type="InterPro" id="IPR000330">
    <property type="entry name" value="SNF2_N"/>
</dbReference>
<dbReference type="InterPro" id="IPR040765">
    <property type="entry name" value="Tudor_1_RapA"/>
</dbReference>
<dbReference type="InterPro" id="IPR040766">
    <property type="entry name" value="Tudor_2_RapA"/>
</dbReference>
<dbReference type="NCBIfam" id="NF003426">
    <property type="entry name" value="PRK04914.1"/>
    <property type="match status" value="1"/>
</dbReference>
<dbReference type="PANTHER" id="PTHR45766">
    <property type="entry name" value="DNA ANNEALING HELICASE AND ENDONUCLEASE ZRANB3 FAMILY MEMBER"/>
    <property type="match status" value="1"/>
</dbReference>
<dbReference type="PANTHER" id="PTHR45766:SF6">
    <property type="entry name" value="SWI_SNF-RELATED MATRIX-ASSOCIATED ACTIN-DEPENDENT REGULATOR OF CHROMATIN SUBFAMILY A-LIKE PROTEIN 1"/>
    <property type="match status" value="1"/>
</dbReference>
<dbReference type="Pfam" id="PF00271">
    <property type="entry name" value="Helicase_C"/>
    <property type="match status" value="1"/>
</dbReference>
<dbReference type="Pfam" id="PF12137">
    <property type="entry name" value="RapA_C"/>
    <property type="match status" value="1"/>
</dbReference>
<dbReference type="Pfam" id="PF00176">
    <property type="entry name" value="SNF2-rel_dom"/>
    <property type="match status" value="1"/>
</dbReference>
<dbReference type="Pfam" id="PF18339">
    <property type="entry name" value="Tudor_1_RapA"/>
    <property type="match status" value="1"/>
</dbReference>
<dbReference type="Pfam" id="PF18337">
    <property type="entry name" value="Tudor_RapA"/>
    <property type="match status" value="1"/>
</dbReference>
<dbReference type="SMART" id="SM00487">
    <property type="entry name" value="DEXDc"/>
    <property type="match status" value="1"/>
</dbReference>
<dbReference type="SMART" id="SM00490">
    <property type="entry name" value="HELICc"/>
    <property type="match status" value="1"/>
</dbReference>
<dbReference type="SUPFAM" id="SSF52540">
    <property type="entry name" value="P-loop containing nucleoside triphosphate hydrolases"/>
    <property type="match status" value="2"/>
</dbReference>
<dbReference type="PROSITE" id="PS51192">
    <property type="entry name" value="HELICASE_ATP_BIND_1"/>
    <property type="match status" value="1"/>
</dbReference>
<dbReference type="PROSITE" id="PS51194">
    <property type="entry name" value="HELICASE_CTER"/>
    <property type="match status" value="1"/>
</dbReference>